<dbReference type="EC" id="5.3.1.9" evidence="1"/>
<dbReference type="EMBL" id="CP001025">
    <property type="protein sequence ID" value="ACB64318.1"/>
    <property type="molecule type" value="Genomic_DNA"/>
</dbReference>
<dbReference type="RefSeq" id="WP_012364074.1">
    <property type="nucleotide sequence ID" value="NC_010551.1"/>
</dbReference>
<dbReference type="SMR" id="B1YRY9"/>
<dbReference type="GeneID" id="93085894"/>
<dbReference type="KEGG" id="bac:BamMC406_1835"/>
<dbReference type="HOGENOM" id="CLU_017947_3_1_4"/>
<dbReference type="OrthoDB" id="140919at2"/>
<dbReference type="UniPathway" id="UPA00109">
    <property type="reaction ID" value="UER00181"/>
</dbReference>
<dbReference type="UniPathway" id="UPA00138"/>
<dbReference type="Proteomes" id="UP000001680">
    <property type="component" value="Chromosome 1"/>
</dbReference>
<dbReference type="GO" id="GO:0005829">
    <property type="term" value="C:cytosol"/>
    <property type="evidence" value="ECO:0007669"/>
    <property type="project" value="TreeGrafter"/>
</dbReference>
<dbReference type="GO" id="GO:0097367">
    <property type="term" value="F:carbohydrate derivative binding"/>
    <property type="evidence" value="ECO:0007669"/>
    <property type="project" value="InterPro"/>
</dbReference>
<dbReference type="GO" id="GO:0004347">
    <property type="term" value="F:glucose-6-phosphate isomerase activity"/>
    <property type="evidence" value="ECO:0007669"/>
    <property type="project" value="UniProtKB-UniRule"/>
</dbReference>
<dbReference type="GO" id="GO:0048029">
    <property type="term" value="F:monosaccharide binding"/>
    <property type="evidence" value="ECO:0007669"/>
    <property type="project" value="TreeGrafter"/>
</dbReference>
<dbReference type="GO" id="GO:0006094">
    <property type="term" value="P:gluconeogenesis"/>
    <property type="evidence" value="ECO:0007669"/>
    <property type="project" value="UniProtKB-UniRule"/>
</dbReference>
<dbReference type="GO" id="GO:0051156">
    <property type="term" value="P:glucose 6-phosphate metabolic process"/>
    <property type="evidence" value="ECO:0007669"/>
    <property type="project" value="TreeGrafter"/>
</dbReference>
<dbReference type="GO" id="GO:0006096">
    <property type="term" value="P:glycolytic process"/>
    <property type="evidence" value="ECO:0007669"/>
    <property type="project" value="UniProtKB-UniRule"/>
</dbReference>
<dbReference type="CDD" id="cd05015">
    <property type="entry name" value="SIS_PGI_1"/>
    <property type="match status" value="1"/>
</dbReference>
<dbReference type="CDD" id="cd05016">
    <property type="entry name" value="SIS_PGI_2"/>
    <property type="match status" value="1"/>
</dbReference>
<dbReference type="Gene3D" id="1.10.1390.10">
    <property type="match status" value="1"/>
</dbReference>
<dbReference type="Gene3D" id="3.40.50.10490">
    <property type="entry name" value="Glucose-6-phosphate isomerase like protein, domain 1"/>
    <property type="match status" value="2"/>
</dbReference>
<dbReference type="HAMAP" id="MF_00473">
    <property type="entry name" value="G6P_isomerase"/>
    <property type="match status" value="1"/>
</dbReference>
<dbReference type="InterPro" id="IPR001672">
    <property type="entry name" value="G6P_Isomerase"/>
</dbReference>
<dbReference type="InterPro" id="IPR023096">
    <property type="entry name" value="G6P_Isomerase_C"/>
</dbReference>
<dbReference type="InterPro" id="IPR018189">
    <property type="entry name" value="Phosphoglucose_isomerase_CS"/>
</dbReference>
<dbReference type="InterPro" id="IPR046348">
    <property type="entry name" value="SIS_dom_sf"/>
</dbReference>
<dbReference type="InterPro" id="IPR035476">
    <property type="entry name" value="SIS_PGI_1"/>
</dbReference>
<dbReference type="InterPro" id="IPR035482">
    <property type="entry name" value="SIS_PGI_2"/>
</dbReference>
<dbReference type="NCBIfam" id="NF001211">
    <property type="entry name" value="PRK00179.1"/>
    <property type="match status" value="1"/>
</dbReference>
<dbReference type="PANTHER" id="PTHR11469">
    <property type="entry name" value="GLUCOSE-6-PHOSPHATE ISOMERASE"/>
    <property type="match status" value="1"/>
</dbReference>
<dbReference type="PANTHER" id="PTHR11469:SF1">
    <property type="entry name" value="GLUCOSE-6-PHOSPHATE ISOMERASE"/>
    <property type="match status" value="1"/>
</dbReference>
<dbReference type="Pfam" id="PF00342">
    <property type="entry name" value="PGI"/>
    <property type="match status" value="1"/>
</dbReference>
<dbReference type="PRINTS" id="PR00662">
    <property type="entry name" value="G6PISOMERASE"/>
</dbReference>
<dbReference type="SUPFAM" id="SSF53697">
    <property type="entry name" value="SIS domain"/>
    <property type="match status" value="1"/>
</dbReference>
<dbReference type="PROSITE" id="PS00765">
    <property type="entry name" value="P_GLUCOSE_ISOMERASE_1"/>
    <property type="match status" value="1"/>
</dbReference>
<dbReference type="PROSITE" id="PS00174">
    <property type="entry name" value="P_GLUCOSE_ISOMERASE_2"/>
    <property type="match status" value="1"/>
</dbReference>
<dbReference type="PROSITE" id="PS51463">
    <property type="entry name" value="P_GLUCOSE_ISOMERASE_3"/>
    <property type="match status" value="1"/>
</dbReference>
<sequence>MTLNSLPAWTALQSHFEQIRHARLRDWFAPENDRAPTRAERFTIPGGGLAADLSKNRINDDTLRLLVQLAREAGVEARRDAMFAGEIVNPTEGRAALHTALRATDPHAPFHAQISAERAKMATFARAVRSGAWTGYTGKRIRHVINIGIGGSDLGPKMVTHALHHVASPDISTHFVSNVDGADLARVLEQVDPEETLAIIVSKTFTTLETMTNARSLRDWFVARGCPEAALAKHFVGVSANPAEVVKFGIDADNVFEMWDWVGGRYSLWSAVGLSIMIAIGPEQFDELLAGANDMDRHFRQAPLERNLPVLLGLIGIWYRNFFGSQSYLVAPYSEALHYLPSYLQQLEMESNGKSARLDGTFVDYPTSAVTWGEPGTNGQHAFFQMLHQGPTIVPIDFIAVLTPEHPLASHHPKLLANCFAQSEALMLGRTLDEARKVAGPGKEALAPHLTFPGNRPTTTLLVDALTPRTLGALIALYEHKVLVQATVWDINPFDQWGVELGKILGKVVEADLSAESVDPAKHDSSTTALIERARAALKR</sequence>
<protein>
    <recommendedName>
        <fullName evidence="1">Glucose-6-phosphate isomerase</fullName>
        <shortName evidence="1">GPI</shortName>
        <ecNumber evidence="1">5.3.1.9</ecNumber>
    </recommendedName>
    <alternativeName>
        <fullName evidence="1">Phosphoglucose isomerase</fullName>
        <shortName evidence="1">PGI</shortName>
    </alternativeName>
    <alternativeName>
        <fullName evidence="1">Phosphohexose isomerase</fullName>
        <shortName evidence="1">PHI</shortName>
    </alternativeName>
</protein>
<accession>B1YRY9</accession>
<gene>
    <name evidence="1" type="primary">pgi</name>
    <name type="ordered locus">BamMC406_1835</name>
</gene>
<name>G6PI_BURA4</name>
<keyword id="KW-0963">Cytoplasm</keyword>
<keyword id="KW-0312">Gluconeogenesis</keyword>
<keyword id="KW-0324">Glycolysis</keyword>
<keyword id="KW-0413">Isomerase</keyword>
<comment type="function">
    <text evidence="1">Catalyzes the reversible isomerization of glucose-6-phosphate to fructose-6-phosphate.</text>
</comment>
<comment type="catalytic activity">
    <reaction evidence="1">
        <text>alpha-D-glucose 6-phosphate = beta-D-fructose 6-phosphate</text>
        <dbReference type="Rhea" id="RHEA:11816"/>
        <dbReference type="ChEBI" id="CHEBI:57634"/>
        <dbReference type="ChEBI" id="CHEBI:58225"/>
        <dbReference type="EC" id="5.3.1.9"/>
    </reaction>
</comment>
<comment type="pathway">
    <text evidence="1">Carbohydrate biosynthesis; gluconeogenesis.</text>
</comment>
<comment type="pathway">
    <text evidence="1">Carbohydrate degradation; glycolysis; D-glyceraldehyde 3-phosphate and glycerone phosphate from D-glucose: step 2/4.</text>
</comment>
<comment type="subcellular location">
    <subcellularLocation>
        <location evidence="1">Cytoplasm</location>
    </subcellularLocation>
</comment>
<comment type="similarity">
    <text evidence="1">Belongs to the GPI family.</text>
</comment>
<evidence type="ECO:0000255" key="1">
    <source>
        <dbReference type="HAMAP-Rule" id="MF_00473"/>
    </source>
</evidence>
<organism>
    <name type="scientific">Burkholderia ambifaria (strain MC40-6)</name>
    <dbReference type="NCBI Taxonomy" id="398577"/>
    <lineage>
        <taxon>Bacteria</taxon>
        <taxon>Pseudomonadati</taxon>
        <taxon>Pseudomonadota</taxon>
        <taxon>Betaproteobacteria</taxon>
        <taxon>Burkholderiales</taxon>
        <taxon>Burkholderiaceae</taxon>
        <taxon>Burkholderia</taxon>
        <taxon>Burkholderia cepacia complex</taxon>
    </lineage>
</organism>
<feature type="chain" id="PRO_1000125699" description="Glucose-6-phosphate isomerase">
    <location>
        <begin position="1"/>
        <end position="540"/>
    </location>
</feature>
<feature type="active site" description="Proton donor" evidence="1">
    <location>
        <position position="350"/>
    </location>
</feature>
<feature type="active site" evidence="1">
    <location>
        <position position="381"/>
    </location>
</feature>
<feature type="active site" evidence="1">
    <location>
        <position position="503"/>
    </location>
</feature>
<reference key="1">
    <citation type="submission" date="2008-04" db="EMBL/GenBank/DDBJ databases">
        <title>Complete sequence of chromosome 1 of Burkholderia ambifaria MC40-6.</title>
        <authorList>
            <person name="Copeland A."/>
            <person name="Lucas S."/>
            <person name="Lapidus A."/>
            <person name="Glavina del Rio T."/>
            <person name="Dalin E."/>
            <person name="Tice H."/>
            <person name="Pitluck S."/>
            <person name="Chain P."/>
            <person name="Malfatti S."/>
            <person name="Shin M."/>
            <person name="Vergez L."/>
            <person name="Lang D."/>
            <person name="Schmutz J."/>
            <person name="Larimer F."/>
            <person name="Land M."/>
            <person name="Hauser L."/>
            <person name="Kyrpides N."/>
            <person name="Lykidis A."/>
            <person name="Ramette A."/>
            <person name="Konstantinidis K."/>
            <person name="Tiedje J."/>
            <person name="Richardson P."/>
        </authorList>
    </citation>
    <scope>NUCLEOTIDE SEQUENCE [LARGE SCALE GENOMIC DNA]</scope>
    <source>
        <strain>MC40-6</strain>
    </source>
</reference>
<proteinExistence type="inferred from homology"/>